<comment type="function">
    <text evidence="1">Provides the (R)-glutamate required for cell wall biosynthesis.</text>
</comment>
<comment type="catalytic activity">
    <reaction evidence="1">
        <text>L-glutamate = D-glutamate</text>
        <dbReference type="Rhea" id="RHEA:12813"/>
        <dbReference type="ChEBI" id="CHEBI:29985"/>
        <dbReference type="ChEBI" id="CHEBI:29986"/>
        <dbReference type="EC" id="5.1.1.3"/>
    </reaction>
</comment>
<comment type="pathway">
    <text evidence="1">Cell wall biogenesis; peptidoglycan biosynthesis.</text>
</comment>
<comment type="similarity">
    <text evidence="1">Belongs to the aspartate/glutamate racemases family.</text>
</comment>
<gene>
    <name evidence="1" type="primary">murI</name>
    <name type="ordered locus">HPSH_04140</name>
</gene>
<sequence length="255" mass="28378">MKIGVFDSGVGGFSVLKSLLKAQLFDEIIYYGDSARVPYGTKDPTTIKQFGLEALDFFKPHKIELLIVACNTASALALEEMQKHSKIPIVGVIGPSILAIKQQVKDKNAPILVLGTKATIQSNAYDNALKQQGYLNVSHLATSLFVPLIEENILEGELLETCMRYYFTPLEILPEVVILGCTHFPLIAHQIEGYFMEHFALSTPPLLIHSGDAIVEYLQQKYALKKNACAFPKVEFHASGDVVWLEKQAKEWLKL</sequence>
<accession>B2UTT1</accession>
<dbReference type="EC" id="5.1.1.3" evidence="1"/>
<dbReference type="EMBL" id="CP001072">
    <property type="protein sequence ID" value="ACD48263.1"/>
    <property type="molecule type" value="Genomic_DNA"/>
</dbReference>
<dbReference type="RefSeq" id="WP_000690300.1">
    <property type="nucleotide sequence ID" value="NC_010698.2"/>
</dbReference>
<dbReference type="SMR" id="B2UTT1"/>
<dbReference type="KEGG" id="hps:HPSH_04140"/>
<dbReference type="HOGENOM" id="CLU_052344_0_2_7"/>
<dbReference type="UniPathway" id="UPA00219"/>
<dbReference type="GO" id="GO:0008881">
    <property type="term" value="F:glutamate racemase activity"/>
    <property type="evidence" value="ECO:0007669"/>
    <property type="project" value="UniProtKB-UniRule"/>
</dbReference>
<dbReference type="GO" id="GO:0071555">
    <property type="term" value="P:cell wall organization"/>
    <property type="evidence" value="ECO:0007669"/>
    <property type="project" value="UniProtKB-KW"/>
</dbReference>
<dbReference type="GO" id="GO:0009252">
    <property type="term" value="P:peptidoglycan biosynthetic process"/>
    <property type="evidence" value="ECO:0007669"/>
    <property type="project" value="UniProtKB-UniRule"/>
</dbReference>
<dbReference type="GO" id="GO:0008360">
    <property type="term" value="P:regulation of cell shape"/>
    <property type="evidence" value="ECO:0007669"/>
    <property type="project" value="UniProtKB-KW"/>
</dbReference>
<dbReference type="FunFam" id="3.40.50.1860:FF:000001">
    <property type="entry name" value="Glutamate racemase"/>
    <property type="match status" value="1"/>
</dbReference>
<dbReference type="Gene3D" id="3.40.50.1860">
    <property type="match status" value="2"/>
</dbReference>
<dbReference type="HAMAP" id="MF_00258">
    <property type="entry name" value="Glu_racemase"/>
    <property type="match status" value="1"/>
</dbReference>
<dbReference type="InterPro" id="IPR015942">
    <property type="entry name" value="Asp/Glu/hydantoin_racemase"/>
</dbReference>
<dbReference type="InterPro" id="IPR001920">
    <property type="entry name" value="Asp/Glu_race"/>
</dbReference>
<dbReference type="InterPro" id="IPR018187">
    <property type="entry name" value="Asp/Glu_racemase_AS_1"/>
</dbReference>
<dbReference type="InterPro" id="IPR033134">
    <property type="entry name" value="Asp/Glu_racemase_AS_2"/>
</dbReference>
<dbReference type="InterPro" id="IPR004391">
    <property type="entry name" value="Glu_race"/>
</dbReference>
<dbReference type="NCBIfam" id="TIGR00067">
    <property type="entry name" value="glut_race"/>
    <property type="match status" value="1"/>
</dbReference>
<dbReference type="PANTHER" id="PTHR21198">
    <property type="entry name" value="GLUTAMATE RACEMASE"/>
    <property type="match status" value="1"/>
</dbReference>
<dbReference type="PANTHER" id="PTHR21198:SF2">
    <property type="entry name" value="GLUTAMATE RACEMASE"/>
    <property type="match status" value="1"/>
</dbReference>
<dbReference type="Pfam" id="PF01177">
    <property type="entry name" value="Asp_Glu_race"/>
    <property type="match status" value="1"/>
</dbReference>
<dbReference type="SUPFAM" id="SSF53681">
    <property type="entry name" value="Aspartate/glutamate racemase"/>
    <property type="match status" value="2"/>
</dbReference>
<dbReference type="PROSITE" id="PS00923">
    <property type="entry name" value="ASP_GLU_RACEMASE_1"/>
    <property type="match status" value="1"/>
</dbReference>
<dbReference type="PROSITE" id="PS00924">
    <property type="entry name" value="ASP_GLU_RACEMASE_2"/>
    <property type="match status" value="1"/>
</dbReference>
<proteinExistence type="inferred from homology"/>
<feature type="chain" id="PRO_1000114048" description="Glutamate racemase">
    <location>
        <begin position="1"/>
        <end position="255"/>
    </location>
</feature>
<feature type="active site" description="Proton donor/acceptor" evidence="1">
    <location>
        <position position="70"/>
    </location>
</feature>
<feature type="active site" description="Proton donor/acceptor" evidence="1">
    <location>
        <position position="181"/>
    </location>
</feature>
<feature type="binding site" evidence="1">
    <location>
        <begin position="7"/>
        <end position="8"/>
    </location>
    <ligand>
        <name>substrate</name>
    </ligand>
</feature>
<feature type="binding site" evidence="1">
    <location>
        <begin position="39"/>
        <end position="40"/>
    </location>
    <ligand>
        <name>substrate</name>
    </ligand>
</feature>
<feature type="binding site" evidence="1">
    <location>
        <begin position="71"/>
        <end position="72"/>
    </location>
    <ligand>
        <name>substrate</name>
    </ligand>
</feature>
<feature type="binding site" evidence="1">
    <location>
        <begin position="182"/>
        <end position="183"/>
    </location>
    <ligand>
        <name>substrate</name>
    </ligand>
</feature>
<protein>
    <recommendedName>
        <fullName evidence="1">Glutamate racemase</fullName>
        <ecNumber evidence="1">5.1.1.3</ecNumber>
    </recommendedName>
</protein>
<evidence type="ECO:0000255" key="1">
    <source>
        <dbReference type="HAMAP-Rule" id="MF_00258"/>
    </source>
</evidence>
<organism>
    <name type="scientific">Helicobacter pylori (strain Shi470)</name>
    <dbReference type="NCBI Taxonomy" id="512562"/>
    <lineage>
        <taxon>Bacteria</taxon>
        <taxon>Pseudomonadati</taxon>
        <taxon>Campylobacterota</taxon>
        <taxon>Epsilonproteobacteria</taxon>
        <taxon>Campylobacterales</taxon>
        <taxon>Helicobacteraceae</taxon>
        <taxon>Helicobacter</taxon>
    </lineage>
</organism>
<keyword id="KW-0133">Cell shape</keyword>
<keyword id="KW-0961">Cell wall biogenesis/degradation</keyword>
<keyword id="KW-0413">Isomerase</keyword>
<keyword id="KW-0573">Peptidoglycan synthesis</keyword>
<reference key="1">
    <citation type="submission" date="2008-05" db="EMBL/GenBank/DDBJ databases">
        <title>Genome sequence of Helicobacter pylori from the remote Amazon: traces of Asian ancestry of the first Americans.</title>
        <authorList>
            <person name="Kersulyte D."/>
            <person name="Kalia A."/>
            <person name="Gilman R.H."/>
            <person name="Berg D.E."/>
        </authorList>
    </citation>
    <scope>NUCLEOTIDE SEQUENCE [LARGE SCALE GENOMIC DNA]</scope>
    <source>
        <strain>Shi470</strain>
    </source>
</reference>
<name>MURI_HELPS</name>